<dbReference type="EC" id="1.6.5.2" evidence="1"/>
<dbReference type="EMBL" id="CP000514">
    <property type="protein sequence ID" value="ABM20208.1"/>
    <property type="molecule type" value="Genomic_DNA"/>
</dbReference>
<dbReference type="SMR" id="A1U5D9"/>
<dbReference type="STRING" id="351348.Maqu_3134"/>
<dbReference type="KEGG" id="maq:Maqu_3134"/>
<dbReference type="eggNOG" id="COG0655">
    <property type="taxonomic scope" value="Bacteria"/>
</dbReference>
<dbReference type="HOGENOM" id="CLU_051402_0_2_6"/>
<dbReference type="OrthoDB" id="9801479at2"/>
<dbReference type="Proteomes" id="UP000000998">
    <property type="component" value="Chromosome"/>
</dbReference>
<dbReference type="GO" id="GO:0016020">
    <property type="term" value="C:membrane"/>
    <property type="evidence" value="ECO:0007669"/>
    <property type="project" value="TreeGrafter"/>
</dbReference>
<dbReference type="GO" id="GO:0050660">
    <property type="term" value="F:flavin adenine dinucleotide binding"/>
    <property type="evidence" value="ECO:0007669"/>
    <property type="project" value="UniProtKB-UniRule"/>
</dbReference>
<dbReference type="GO" id="GO:0010181">
    <property type="term" value="F:FMN binding"/>
    <property type="evidence" value="ECO:0007669"/>
    <property type="project" value="InterPro"/>
</dbReference>
<dbReference type="GO" id="GO:0051287">
    <property type="term" value="F:NAD binding"/>
    <property type="evidence" value="ECO:0007669"/>
    <property type="project" value="UniProtKB-UniRule"/>
</dbReference>
<dbReference type="GO" id="GO:0050136">
    <property type="term" value="F:NADH:ubiquinone reductase (non-electrogenic) activity"/>
    <property type="evidence" value="ECO:0007669"/>
    <property type="project" value="RHEA"/>
</dbReference>
<dbReference type="GO" id="GO:0050661">
    <property type="term" value="F:NADP binding"/>
    <property type="evidence" value="ECO:0007669"/>
    <property type="project" value="UniProtKB-UniRule"/>
</dbReference>
<dbReference type="GO" id="GO:0008753">
    <property type="term" value="F:NADPH dehydrogenase (quinone) activity"/>
    <property type="evidence" value="ECO:0007669"/>
    <property type="project" value="RHEA"/>
</dbReference>
<dbReference type="FunFam" id="3.40.50.360:FF:000001">
    <property type="entry name" value="NAD(P)H dehydrogenase (Quinone) FQR1-like"/>
    <property type="match status" value="1"/>
</dbReference>
<dbReference type="Gene3D" id="3.40.50.360">
    <property type="match status" value="1"/>
</dbReference>
<dbReference type="HAMAP" id="MF_01017">
    <property type="entry name" value="NQOR"/>
    <property type="match status" value="1"/>
</dbReference>
<dbReference type="InterPro" id="IPR008254">
    <property type="entry name" value="Flavodoxin/NO_synth"/>
</dbReference>
<dbReference type="InterPro" id="IPR029039">
    <property type="entry name" value="Flavoprotein-like_sf"/>
</dbReference>
<dbReference type="InterPro" id="IPR010089">
    <property type="entry name" value="Flavoprotein_WrbA-like"/>
</dbReference>
<dbReference type="InterPro" id="IPR005025">
    <property type="entry name" value="FMN_Rdtase-like_dom"/>
</dbReference>
<dbReference type="InterPro" id="IPR037513">
    <property type="entry name" value="NQO"/>
</dbReference>
<dbReference type="NCBIfam" id="TIGR01755">
    <property type="entry name" value="flav_wrbA"/>
    <property type="match status" value="1"/>
</dbReference>
<dbReference type="NCBIfam" id="NF002999">
    <property type="entry name" value="PRK03767.1"/>
    <property type="match status" value="1"/>
</dbReference>
<dbReference type="PANTHER" id="PTHR30546">
    <property type="entry name" value="FLAVODOXIN-RELATED PROTEIN WRBA-RELATED"/>
    <property type="match status" value="1"/>
</dbReference>
<dbReference type="PANTHER" id="PTHR30546:SF23">
    <property type="entry name" value="FLAVOPROTEIN-LIKE PROTEIN YCP4-RELATED"/>
    <property type="match status" value="1"/>
</dbReference>
<dbReference type="Pfam" id="PF03358">
    <property type="entry name" value="FMN_red"/>
    <property type="match status" value="1"/>
</dbReference>
<dbReference type="SUPFAM" id="SSF52218">
    <property type="entry name" value="Flavoproteins"/>
    <property type="match status" value="1"/>
</dbReference>
<dbReference type="PROSITE" id="PS50902">
    <property type="entry name" value="FLAVODOXIN_LIKE"/>
    <property type="match status" value="1"/>
</dbReference>
<name>NQOR_MARN8</name>
<gene>
    <name type="ordered locus">Maqu_3134</name>
</gene>
<feature type="chain" id="PRO_0000291018" description="NAD(P)H dehydrogenase (quinone)">
    <location>
        <begin position="1"/>
        <end position="199"/>
    </location>
</feature>
<feature type="domain" description="Flavodoxin-like" evidence="1">
    <location>
        <begin position="4"/>
        <end position="190"/>
    </location>
</feature>
<feature type="binding site" evidence="1">
    <location>
        <begin position="10"/>
        <end position="15"/>
    </location>
    <ligand>
        <name>FMN</name>
        <dbReference type="ChEBI" id="CHEBI:58210"/>
    </ligand>
</feature>
<feature type="binding site" evidence="1">
    <location>
        <position position="12"/>
    </location>
    <ligand>
        <name>NAD(+)</name>
        <dbReference type="ChEBI" id="CHEBI:57540"/>
    </ligand>
</feature>
<feature type="binding site" evidence="1">
    <location>
        <begin position="79"/>
        <end position="81"/>
    </location>
    <ligand>
        <name>FMN</name>
        <dbReference type="ChEBI" id="CHEBI:58210"/>
    </ligand>
</feature>
<feature type="binding site" evidence="1">
    <location>
        <position position="99"/>
    </location>
    <ligand>
        <name>substrate</name>
    </ligand>
</feature>
<feature type="binding site" evidence="1">
    <location>
        <begin position="114"/>
        <end position="119"/>
    </location>
    <ligand>
        <name>FMN</name>
        <dbReference type="ChEBI" id="CHEBI:58210"/>
    </ligand>
</feature>
<feature type="binding site" evidence="1">
    <location>
        <position position="134"/>
    </location>
    <ligand>
        <name>FMN</name>
        <dbReference type="ChEBI" id="CHEBI:58210"/>
    </ligand>
</feature>
<keyword id="KW-0285">Flavoprotein</keyword>
<keyword id="KW-0288">FMN</keyword>
<keyword id="KW-0520">NAD</keyword>
<keyword id="KW-0521">NADP</keyword>
<keyword id="KW-0547">Nucleotide-binding</keyword>
<keyword id="KW-0560">Oxidoreductase</keyword>
<organism>
    <name type="scientific">Marinobacter nauticus (strain ATCC 700491 / DSM 11845 / VT8)</name>
    <name type="common">Marinobacter aquaeolei</name>
    <dbReference type="NCBI Taxonomy" id="351348"/>
    <lineage>
        <taxon>Bacteria</taxon>
        <taxon>Pseudomonadati</taxon>
        <taxon>Pseudomonadota</taxon>
        <taxon>Gammaproteobacteria</taxon>
        <taxon>Pseudomonadales</taxon>
        <taxon>Marinobacteraceae</taxon>
        <taxon>Marinobacter</taxon>
    </lineage>
</organism>
<proteinExistence type="inferred from homology"/>
<accession>A1U5D9</accession>
<sequence length="199" mass="20923">MAKVLVLYYSMYGHIETMANTVAEGARGVDGADVVVKRVPETMADEAFLNAGGKADQGAPVADPKELADYDAIIFGTPTRFGNMAGQMRTFLDQTGGLWAEGKLHGKVGSVFTSTGTGGGQEQTITSFWTTLAHHGMVLVPLGYGIPEFFDISEVNGGTPYGASTIAGGDGSRQPSEKELAIARFQGKHVAELAIKLHG</sequence>
<protein>
    <recommendedName>
        <fullName evidence="1">NAD(P)H dehydrogenase (quinone)</fullName>
        <ecNumber evidence="1">1.6.5.2</ecNumber>
    </recommendedName>
    <alternativeName>
        <fullName>Flavoprotein WrbA</fullName>
    </alternativeName>
    <alternativeName>
        <fullName evidence="1">NAD(P)H:quinone oxidoreductase</fullName>
        <shortName evidence="1">NQO</shortName>
    </alternativeName>
</protein>
<reference key="1">
    <citation type="journal article" date="2011" name="Appl. Environ. Microbiol.">
        <title>Genomic potential of Marinobacter aquaeolei, a biogeochemical 'opportunitroph'.</title>
        <authorList>
            <person name="Singer E."/>
            <person name="Webb E.A."/>
            <person name="Nelson W.C."/>
            <person name="Heidelberg J.F."/>
            <person name="Ivanova N."/>
            <person name="Pati A."/>
            <person name="Edwards K.J."/>
        </authorList>
    </citation>
    <scope>NUCLEOTIDE SEQUENCE [LARGE SCALE GENOMIC DNA]</scope>
    <source>
        <strain>ATCC 700491 / DSM 11845 / VT8</strain>
    </source>
</reference>
<evidence type="ECO:0000255" key="1">
    <source>
        <dbReference type="HAMAP-Rule" id="MF_01017"/>
    </source>
</evidence>
<comment type="catalytic activity">
    <reaction evidence="1">
        <text>a quinone + NADH + H(+) = a quinol + NAD(+)</text>
        <dbReference type="Rhea" id="RHEA:46160"/>
        <dbReference type="ChEBI" id="CHEBI:15378"/>
        <dbReference type="ChEBI" id="CHEBI:24646"/>
        <dbReference type="ChEBI" id="CHEBI:57540"/>
        <dbReference type="ChEBI" id="CHEBI:57945"/>
        <dbReference type="ChEBI" id="CHEBI:132124"/>
        <dbReference type="EC" id="1.6.5.2"/>
    </reaction>
</comment>
<comment type="catalytic activity">
    <reaction evidence="1">
        <text>a quinone + NADPH + H(+) = a quinol + NADP(+)</text>
        <dbReference type="Rhea" id="RHEA:46164"/>
        <dbReference type="ChEBI" id="CHEBI:15378"/>
        <dbReference type="ChEBI" id="CHEBI:24646"/>
        <dbReference type="ChEBI" id="CHEBI:57783"/>
        <dbReference type="ChEBI" id="CHEBI:58349"/>
        <dbReference type="ChEBI" id="CHEBI:132124"/>
        <dbReference type="EC" id="1.6.5.2"/>
    </reaction>
</comment>
<comment type="cofactor">
    <cofactor evidence="1">
        <name>FMN</name>
        <dbReference type="ChEBI" id="CHEBI:58210"/>
    </cofactor>
    <text evidence="1">Binds 1 FMN per monomer.</text>
</comment>
<comment type="similarity">
    <text evidence="1">Belongs to the WrbA family.</text>
</comment>